<comment type="function">
    <text evidence="8 9 10 13">Part of the gene cluster that mediates the biosynthesis of azaphilone pigments (MonAzPs), a complex mixture of compounds with a common azaphilone skeleton very widely used as food colorants (PubMed:26946170, PubMed:28959415, PubMed:34220766). Seems not to play a direct role in the biosynthesis but might have a regulatorx function (Probable).</text>
</comment>
<comment type="induction">
    <text evidence="10">Expression seems not to be regulated by the azaphilone pigments (MonAzPs) gene cluster-specific transcription regulator pigB.</text>
</comment>
<comment type="biotechnology">
    <text evidence="3 4 5 6 7 11">As colorants, MonAzPs are widely used in various food products for centuries (PubMed:37087240). Moreover, MonAzPs also possess wide-ranging biological activities such as antibacterial activity, preventing hypertension, lowering cholesterol levels, causing hypolipidemic effects, and displaying antiobesity and antitumor activities (PubMed:16283302, PubMed:16660141, PubMed:17191930, PubMed:20666456, PubMed:22562164).</text>
</comment>
<accession>A0A1B1JE71</accession>
<keyword id="KW-0040">ANK repeat</keyword>
<keyword id="KW-0325">Glycoprotein</keyword>
<keyword id="KW-0608">Pigment</keyword>
<keyword id="KW-0677">Repeat</keyword>
<keyword id="KW-0732">Signal</keyword>
<gene>
    <name evidence="12" type="primary">pigL</name>
</gene>
<evidence type="ECO:0000255" key="1"/>
<evidence type="ECO:0000255" key="2">
    <source>
        <dbReference type="PROSITE-ProRule" id="PRU00498"/>
    </source>
</evidence>
<evidence type="ECO:0000269" key="3">
    <source>
    </source>
</evidence>
<evidence type="ECO:0000269" key="4">
    <source>
    </source>
</evidence>
<evidence type="ECO:0000269" key="5">
    <source>
    </source>
</evidence>
<evidence type="ECO:0000269" key="6">
    <source>
    </source>
</evidence>
<evidence type="ECO:0000269" key="7">
    <source>
    </source>
</evidence>
<evidence type="ECO:0000269" key="8">
    <source>
    </source>
</evidence>
<evidence type="ECO:0000269" key="9">
    <source>
    </source>
</evidence>
<evidence type="ECO:0000269" key="10">
    <source>
    </source>
</evidence>
<evidence type="ECO:0000269" key="11">
    <source>
    </source>
</evidence>
<evidence type="ECO:0000303" key="12">
    <source>
    </source>
</evidence>
<evidence type="ECO:0000305" key="13">
    <source>
    </source>
</evidence>
<feature type="signal peptide" evidence="1">
    <location>
        <begin position="1"/>
        <end position="23"/>
    </location>
</feature>
<feature type="chain" id="PRO_0000460210" description="Azaphilone pigments biosynthesis cluster protein L">
    <location>
        <begin position="24"/>
        <end position="473"/>
    </location>
</feature>
<feature type="repeat" description="ANK 1" evidence="1">
    <location>
        <begin position="403"/>
        <end position="432"/>
    </location>
</feature>
<feature type="repeat" description="ANK 2" evidence="1">
    <location>
        <begin position="436"/>
        <end position="465"/>
    </location>
</feature>
<feature type="glycosylation site" description="N-linked (GlcNAc...) asparagine" evidence="2">
    <location>
        <position position="462"/>
    </location>
</feature>
<reference key="1">
    <citation type="journal article" date="2016" name="Appl. Microbiol. Biotechnol.">
        <title>Identification and role analysis of an intermediate produced by a polygenic mutant of Monascus pigments cluster in Monascus ruber M7.</title>
        <authorList>
            <person name="Liu J."/>
            <person name="Zhou Y."/>
            <person name="Yi T."/>
            <person name="Zhao M."/>
            <person name="Xie N."/>
            <person name="Lei M."/>
            <person name="Liu Q."/>
            <person name="Shao Y."/>
            <person name="Chen F."/>
        </authorList>
    </citation>
    <scope>NUCLEOTIDE SEQUENCE [MRNA]</scope>
    <scope>FUNCTION</scope>
    <source>
        <strain>M7</strain>
    </source>
</reference>
<reference key="2">
    <citation type="journal article" date="1977" name="Plant Physiol.">
        <title>Pigmentation and antibacterial activity of fast neutron- and X-ray-induced strains of Monascus purpureus went.</title>
        <authorList>
            <person name="Wong H.C."/>
            <person name="Bau Y.S."/>
        </authorList>
    </citation>
    <scope>BIOTECHNOLOGY</scope>
</reference>
<reference key="3">
    <citation type="journal article" date="2005" name="Chem. Biodivers.">
        <title>Anti-tumor-initiating effects of monascin, an azaphilonoid pigment from the extract of Monascus pilosus fermented rice (red-mold rice).</title>
        <authorList>
            <person name="Akihisa T."/>
            <person name="Tokuda H."/>
            <person name="Ukiya M."/>
            <person name="Kiyota A."/>
            <person name="Yasukawa K."/>
            <person name="Sakamoto N."/>
            <person name="Kimura Y."/>
            <person name="Suzuki T."/>
            <person name="Takayasu J."/>
            <person name="Nishino H."/>
        </authorList>
    </citation>
    <scope>BIOTECHNOLOGY</scope>
</reference>
<reference key="4">
    <citation type="journal article" date="2006" name="Appl. Microbiol. Biotechnol.">
        <title>In vivo hypolipidemic effects and safety of low dosage Monascus powder in a hamster model of hyperlipidemia.</title>
        <authorList>
            <person name="Lee C.L."/>
            <person name="Tsai T.Y."/>
            <person name="Wang J.J."/>
            <person name="Pan T.M."/>
        </authorList>
    </citation>
    <scope>BIOTECHNOLOGY</scope>
</reference>
<reference key="5">
    <citation type="journal article" date="2010" name="J. Agric. Food Chem.">
        <title>Monascin and ankaflavin act as novel hypolipidemic and high-density lipoprotein cholesterol-raising agents in red mold dioscorea.</title>
        <authorList>
            <person name="Lee C.L."/>
            <person name="Kung Y.H."/>
            <person name="Wu C.L."/>
            <person name="Hsu Y.W."/>
            <person name="Pan T.M."/>
        </authorList>
    </citation>
    <scope>BIOTECHNOLOGY</scope>
</reference>
<reference key="6">
    <citation type="journal article" date="2012" name="Appl. Microbiol. Biotechnol.">
        <title>Development of Monascus fermentation technology for high hypolipidemic effect.</title>
        <authorList>
            <person name="Lee C.L."/>
            <person name="Pan T.M."/>
        </authorList>
    </citation>
    <scope>BIOTECHNOLOGY</scope>
</reference>
<reference key="7">
    <citation type="journal article" date="2017" name="Chem. Sci.">
        <title>Orange, red, yellow: biosynthesis of azaphilone pigments in Monascus fungi.</title>
        <authorList>
            <person name="Chen W."/>
            <person name="Chen R."/>
            <person name="Liu Q."/>
            <person name="He Y."/>
            <person name="He K."/>
            <person name="Ding X."/>
            <person name="Kang L."/>
            <person name="Guo X."/>
            <person name="Xie N."/>
            <person name="Zhou Y."/>
            <person name="Lu Y."/>
            <person name="Cox R.J."/>
            <person name="Molnar I."/>
            <person name="Li M."/>
            <person name="Shao Y."/>
            <person name="Chen F."/>
        </authorList>
    </citation>
    <scope>FUNCTION</scope>
</reference>
<reference key="8">
    <citation type="journal article" date="2021" name="Front. Microbiol.">
        <title>An integrated approach to determine the boundaries of the azaphilone pigment biosynthetic gene cluster of Monascus ruber M7 gown on potato dextrose agar.</title>
        <authorList>
            <person name="Liu Q."/>
            <person name="Zhong S."/>
            <person name="Wang X."/>
            <person name="Gao S."/>
            <person name="Yang X."/>
            <person name="Chen F."/>
            <person name="Molnar I."/>
        </authorList>
    </citation>
    <scope>FUNCTION</scope>
    <scope>INDUCTION</scope>
</reference>
<reference key="9">
    <citation type="journal article" date="2023" name="Food Res. Intern.">
        <title>Improved natural food colorant production in the filamentous fungus Monascus ruber using CRISPR-based engineering.</title>
        <authorList>
            <person name="Ree Yoon H."/>
            <person name="Han S."/>
            <person name="Chul Shin S."/>
            <person name="Cheong Yeom S."/>
            <person name="Jin Kim H."/>
        </authorList>
    </citation>
    <scope>BIOTECHNOLOGY</scope>
</reference>
<proteinExistence type="evidence at protein level"/>
<name>PIGL_MONRU</name>
<organism>
    <name type="scientific">Monascus ruber</name>
    <name type="common">Mold</name>
    <dbReference type="NCBI Taxonomy" id="89489"/>
    <lineage>
        <taxon>Eukaryota</taxon>
        <taxon>Fungi</taxon>
        <taxon>Dikarya</taxon>
        <taxon>Ascomycota</taxon>
        <taxon>Pezizomycotina</taxon>
        <taxon>Eurotiomycetes</taxon>
        <taxon>Eurotiomycetidae</taxon>
        <taxon>Eurotiales</taxon>
        <taxon>Aspergillaceae</taxon>
        <taxon>Monascus</taxon>
    </lineage>
</organism>
<dbReference type="EMBL" id="KX290843">
    <property type="protein sequence ID" value="ANS12243.1"/>
    <property type="molecule type" value="mRNA"/>
</dbReference>
<dbReference type="SMR" id="A0A1B1JE71"/>
<dbReference type="GO" id="GO:0031409">
    <property type="term" value="F:pigment binding"/>
    <property type="evidence" value="ECO:0007669"/>
    <property type="project" value="UniProtKB-KW"/>
</dbReference>
<dbReference type="Gene3D" id="1.25.40.20">
    <property type="entry name" value="Ankyrin repeat-containing domain"/>
    <property type="match status" value="1"/>
</dbReference>
<dbReference type="InterPro" id="IPR002110">
    <property type="entry name" value="Ankyrin_rpt"/>
</dbReference>
<dbReference type="InterPro" id="IPR036770">
    <property type="entry name" value="Ankyrin_rpt-contain_sf"/>
</dbReference>
<dbReference type="InterPro" id="IPR031348">
    <property type="entry name" value="PigL_N"/>
</dbReference>
<dbReference type="PANTHER" id="PTHR10039">
    <property type="entry name" value="AMELOGENIN"/>
    <property type="match status" value="1"/>
</dbReference>
<dbReference type="PANTHER" id="PTHR10039:SF16">
    <property type="entry name" value="GPI INOSITOL-DEACYLASE"/>
    <property type="match status" value="1"/>
</dbReference>
<dbReference type="Pfam" id="PF12796">
    <property type="entry name" value="Ank_2"/>
    <property type="match status" value="1"/>
</dbReference>
<dbReference type="Pfam" id="PF17111">
    <property type="entry name" value="PigL_N"/>
    <property type="match status" value="1"/>
</dbReference>
<dbReference type="SMART" id="SM00248">
    <property type="entry name" value="ANK"/>
    <property type="match status" value="2"/>
</dbReference>
<dbReference type="SUPFAM" id="SSF48403">
    <property type="entry name" value="Ankyrin repeat"/>
    <property type="match status" value="1"/>
</dbReference>
<dbReference type="PROSITE" id="PS50297">
    <property type="entry name" value="ANK_REP_REGION"/>
    <property type="match status" value="2"/>
</dbReference>
<dbReference type="PROSITE" id="PS50088">
    <property type="entry name" value="ANK_REPEAT"/>
    <property type="match status" value="2"/>
</dbReference>
<sequence>MAELSIASGIVGLLSLGIQVTQSLISFYSAYKDQDGDLAKITQNFEDLQGIFQSLESAVQDRQSQGDMDEVLKEVDKAMQGCHEIIEELQKECQKLHTDLGLSLKGHIQVAGRRAAYPFRKSTLQKLKEDTARNQNQLDLFLHSLPKDLDETYERILCSIDENYVDDVCRILTLLCFSARPLTINELIDAHAVDLSASPHLDREGRSYEQNDLIDICLGLIEISKTEDSGQQLLIARIAHFSVQEYLQSERIQQQKANRFAIQSGPANTEITQICLVYLLEPMLSSGVLDTIKIKEFPLAHFAAEYWYHHYVNSREGRLKVEELLQRLFQYDTNCFVTWIRIYGLDRQGTLRPNSDYQRPIDDIGSPFYYASLLGLESTLSNMIAAGARDASFLEMVNAQSGEYGNALQAASSGGHWKVVQMLLDQGADVNAQSGRYGNALHAASSRGHKKVVQMLLDHGANVSTQGRELTLW</sequence>
<protein>
    <recommendedName>
        <fullName evidence="12">Azaphilone pigments biosynthesis cluster protein L</fullName>
    </recommendedName>
</protein>